<proteinExistence type="inferred from homology"/>
<organism>
    <name type="scientific">Burkholderia orbicola (strain AU 1054)</name>
    <dbReference type="NCBI Taxonomy" id="331271"/>
    <lineage>
        <taxon>Bacteria</taxon>
        <taxon>Pseudomonadati</taxon>
        <taxon>Pseudomonadota</taxon>
        <taxon>Betaproteobacteria</taxon>
        <taxon>Burkholderiales</taxon>
        <taxon>Burkholderiaceae</taxon>
        <taxon>Burkholderia</taxon>
        <taxon>Burkholderia cepacia complex</taxon>
        <taxon>Burkholderia orbicola</taxon>
    </lineage>
</organism>
<comment type="function">
    <text evidence="1">Part of the ABC transporter complex AraFGH involved in arabinose import. Responsible for energy coupling to the transport system.</text>
</comment>
<comment type="catalytic activity">
    <reaction evidence="1">
        <text>L-arabinose(out) + ATP + H2O = L-arabinose(in) + ADP + phosphate + H(+)</text>
        <dbReference type="Rhea" id="RHEA:30007"/>
        <dbReference type="ChEBI" id="CHEBI:15377"/>
        <dbReference type="ChEBI" id="CHEBI:15378"/>
        <dbReference type="ChEBI" id="CHEBI:17535"/>
        <dbReference type="ChEBI" id="CHEBI:30616"/>
        <dbReference type="ChEBI" id="CHEBI:43474"/>
        <dbReference type="ChEBI" id="CHEBI:456216"/>
        <dbReference type="EC" id="7.5.2.12"/>
    </reaction>
</comment>
<comment type="subunit">
    <text evidence="1">The complex is composed of two ATP-binding proteins (AraG), two transmembrane proteins (AraH) and a solute-binding protein (AraF).</text>
</comment>
<comment type="subcellular location">
    <subcellularLocation>
        <location evidence="1">Cell inner membrane</location>
        <topology evidence="1">Peripheral membrane protein</topology>
    </subcellularLocation>
</comment>
<comment type="similarity">
    <text evidence="1">Belongs to the ABC transporter superfamily. Arabinose importer (TC 3.A.1.2.2) family.</text>
</comment>
<reference key="1">
    <citation type="submission" date="2006-05" db="EMBL/GenBank/DDBJ databases">
        <title>Complete sequence of chromosome 1 of Burkholderia cenocepacia AU 1054.</title>
        <authorList>
            <consortium name="US DOE Joint Genome Institute"/>
            <person name="Copeland A."/>
            <person name="Lucas S."/>
            <person name="Lapidus A."/>
            <person name="Barry K."/>
            <person name="Detter J.C."/>
            <person name="Glavina del Rio T."/>
            <person name="Hammon N."/>
            <person name="Israni S."/>
            <person name="Dalin E."/>
            <person name="Tice H."/>
            <person name="Pitluck S."/>
            <person name="Chain P."/>
            <person name="Malfatti S."/>
            <person name="Shin M."/>
            <person name="Vergez L."/>
            <person name="Schmutz J."/>
            <person name="Larimer F."/>
            <person name="Land M."/>
            <person name="Hauser L."/>
            <person name="Kyrpides N."/>
            <person name="Lykidis A."/>
            <person name="LiPuma J.J."/>
            <person name="Konstantinidis K."/>
            <person name="Tiedje J.M."/>
            <person name="Richardson P."/>
        </authorList>
    </citation>
    <scope>NUCLEOTIDE SEQUENCE [LARGE SCALE GENOMIC DNA]</scope>
    <source>
        <strain>AU 1054</strain>
    </source>
</reference>
<keyword id="KW-0067">ATP-binding</keyword>
<keyword id="KW-0997">Cell inner membrane</keyword>
<keyword id="KW-1003">Cell membrane</keyword>
<keyword id="KW-0472">Membrane</keyword>
<keyword id="KW-0547">Nucleotide-binding</keyword>
<keyword id="KW-0677">Repeat</keyword>
<keyword id="KW-0762">Sugar transport</keyword>
<keyword id="KW-1278">Translocase</keyword>
<keyword id="KW-0813">Transport</keyword>
<gene>
    <name evidence="1" type="primary">araG1</name>
    <name type="ordered locus">Bcen_0139</name>
</gene>
<feature type="chain" id="PRO_0000270455" description="Arabinose import ATP-binding protein AraG 1">
    <location>
        <begin position="1"/>
        <end position="503"/>
    </location>
</feature>
<feature type="domain" description="ABC transporter 1" evidence="1">
    <location>
        <begin position="5"/>
        <end position="240"/>
    </location>
</feature>
<feature type="domain" description="ABC transporter 2" evidence="1">
    <location>
        <begin position="251"/>
        <end position="497"/>
    </location>
</feature>
<feature type="binding site" evidence="1">
    <location>
        <begin position="37"/>
        <end position="44"/>
    </location>
    <ligand>
        <name>ATP</name>
        <dbReference type="ChEBI" id="CHEBI:30616"/>
    </ligand>
</feature>
<name>ARAG1_BURO1</name>
<accession>Q1BZA2</accession>
<sequence>MSAALRFDNIGKVFPGVRALDGISFDVHAGEVHGLMGENGAGKSTLLKILGGEYQPDAGSVLVDGRPVQFANAAASIAAGIAVIHQELQYVPDLTVAENLLLGRLPNAFGWVKKREAKRYVRERLAEMGVDLDPDARLGRLSIAQRQMVEICKALMRNARVIALDEPTSSLSHRETEVLFKLVDDLRAQGRALIYISHRMDEIYRLCDACTIFRDGRKIASHDALADVPRERLVAEMVGREIADIYHYAPRTLGDVRFSAEGVDGPALREPASFSVRAGEIVGFFGLVGAGRSELMRLVYGADRRRAGALTLDGKRIDVKRTGDAIRHGIVLCPEDRKEEGIIAIASVAENINISCRRHSLRAGLFINGKTESETADRFIQRLKIKTPNRRQKIRFLSGGNQQKAILSRWLAEPDLKVVILDEPTRGIDVGAKHEIYDVIYRLAERGCAIVMVSSELPEVLGVSDRIVVMREGRIAGELPRADANEHAVLNLALPQTSAVEAA</sequence>
<evidence type="ECO:0000255" key="1">
    <source>
        <dbReference type="HAMAP-Rule" id="MF_01721"/>
    </source>
</evidence>
<protein>
    <recommendedName>
        <fullName evidence="1">Arabinose import ATP-binding protein AraG 1</fullName>
        <ecNumber evidence="1">7.5.2.12</ecNumber>
    </recommendedName>
</protein>
<dbReference type="EC" id="7.5.2.12" evidence="1"/>
<dbReference type="EMBL" id="CP000378">
    <property type="protein sequence ID" value="ABF75053.1"/>
    <property type="molecule type" value="Genomic_DNA"/>
</dbReference>
<dbReference type="SMR" id="Q1BZA2"/>
<dbReference type="HOGENOM" id="CLU_000604_92_3_4"/>
<dbReference type="GO" id="GO:0005886">
    <property type="term" value="C:plasma membrane"/>
    <property type="evidence" value="ECO:0007669"/>
    <property type="project" value="UniProtKB-SubCell"/>
</dbReference>
<dbReference type="GO" id="GO:0015612">
    <property type="term" value="F:ABC-type L-arabinose transporter activity"/>
    <property type="evidence" value="ECO:0007669"/>
    <property type="project" value="UniProtKB-EC"/>
</dbReference>
<dbReference type="GO" id="GO:0005524">
    <property type="term" value="F:ATP binding"/>
    <property type="evidence" value="ECO:0007669"/>
    <property type="project" value="UniProtKB-KW"/>
</dbReference>
<dbReference type="GO" id="GO:0016887">
    <property type="term" value="F:ATP hydrolysis activity"/>
    <property type="evidence" value="ECO:0007669"/>
    <property type="project" value="InterPro"/>
</dbReference>
<dbReference type="CDD" id="cd03216">
    <property type="entry name" value="ABC_Carb_Monos_I"/>
    <property type="match status" value="1"/>
</dbReference>
<dbReference type="CDD" id="cd03215">
    <property type="entry name" value="ABC_Carb_Monos_II"/>
    <property type="match status" value="1"/>
</dbReference>
<dbReference type="FunFam" id="3.40.50.300:FF:000127">
    <property type="entry name" value="Ribose import ATP-binding protein RbsA"/>
    <property type="match status" value="1"/>
</dbReference>
<dbReference type="Gene3D" id="3.40.50.300">
    <property type="entry name" value="P-loop containing nucleotide triphosphate hydrolases"/>
    <property type="match status" value="2"/>
</dbReference>
<dbReference type="InterPro" id="IPR003593">
    <property type="entry name" value="AAA+_ATPase"/>
</dbReference>
<dbReference type="InterPro" id="IPR050107">
    <property type="entry name" value="ABC_carbohydrate_import_ATPase"/>
</dbReference>
<dbReference type="InterPro" id="IPR003439">
    <property type="entry name" value="ABC_transporter-like_ATP-bd"/>
</dbReference>
<dbReference type="InterPro" id="IPR017871">
    <property type="entry name" value="ABC_transporter-like_CS"/>
</dbReference>
<dbReference type="InterPro" id="IPR027417">
    <property type="entry name" value="P-loop_NTPase"/>
</dbReference>
<dbReference type="NCBIfam" id="NF008442">
    <property type="entry name" value="PRK11288.1"/>
    <property type="match status" value="1"/>
</dbReference>
<dbReference type="PANTHER" id="PTHR43790:SF6">
    <property type="entry name" value="ARABINOSE IMPORT ATP-BINDING PROTEIN ARAG"/>
    <property type="match status" value="1"/>
</dbReference>
<dbReference type="PANTHER" id="PTHR43790">
    <property type="entry name" value="CARBOHYDRATE TRANSPORT ATP-BINDING PROTEIN MG119-RELATED"/>
    <property type="match status" value="1"/>
</dbReference>
<dbReference type="Pfam" id="PF00005">
    <property type="entry name" value="ABC_tran"/>
    <property type="match status" value="2"/>
</dbReference>
<dbReference type="SMART" id="SM00382">
    <property type="entry name" value="AAA"/>
    <property type="match status" value="2"/>
</dbReference>
<dbReference type="SUPFAM" id="SSF52540">
    <property type="entry name" value="P-loop containing nucleoside triphosphate hydrolases"/>
    <property type="match status" value="2"/>
</dbReference>
<dbReference type="PROSITE" id="PS00211">
    <property type="entry name" value="ABC_TRANSPORTER_1"/>
    <property type="match status" value="1"/>
</dbReference>
<dbReference type="PROSITE" id="PS50893">
    <property type="entry name" value="ABC_TRANSPORTER_2"/>
    <property type="match status" value="2"/>
</dbReference>
<dbReference type="PROSITE" id="PS51268">
    <property type="entry name" value="ARAG"/>
    <property type="match status" value="1"/>
</dbReference>